<sequence length="450" mass="49196">MGRRLFGTDGLRGQVNIYPMTADMALRLGLAAGTRFRNGNRRHRVVIGKDTRLSGYMFESALTAGLCAAGMDVFQVGPLPTPAISFLTRNMRADLGVVISASHNPFMDNGIKFFDRSGFKLPDDVENQMTDMVLDPDWQWDYPASEKVGRAYKIADAPGRYIVYIKSSFPADLTLDGLRVVIDCANGANYKVAPLALEELGAEVIKLGTEPNGLNINHQCGSLYPEVVAAKVRETRADIGLALDGDADRLIVVDEKGTILDGDQIMALCAQDLMAKGKLPGNMLVATVMSNMALEVFMKEHGGTLLRTAVGDRYVVEAMRQHGALLGGEQSGHLIFREYSTTGDGLLAALQILRIMRERGKPLSELAGQLQLFPQQLINVHVERKIPFAECQPVADAVAAIETELGDRGRVLLRYSGTESVCRVMVEGEHPEQVARLAEMLAETVQKHLR</sequence>
<evidence type="ECO:0000255" key="1">
    <source>
        <dbReference type="HAMAP-Rule" id="MF_01554"/>
    </source>
</evidence>
<dbReference type="EC" id="5.4.2.10" evidence="1"/>
<dbReference type="EMBL" id="CP000527">
    <property type="protein sequence ID" value="ABM28800.1"/>
    <property type="molecule type" value="Genomic_DNA"/>
</dbReference>
<dbReference type="RefSeq" id="WP_010938578.1">
    <property type="nucleotide sequence ID" value="NC_008751.1"/>
</dbReference>
<dbReference type="SMR" id="A1VED4"/>
<dbReference type="KEGG" id="dvl:Dvul_1783"/>
<dbReference type="HOGENOM" id="CLU_016950_7_0_7"/>
<dbReference type="Proteomes" id="UP000009173">
    <property type="component" value="Chromosome"/>
</dbReference>
<dbReference type="GO" id="GO:0005829">
    <property type="term" value="C:cytosol"/>
    <property type="evidence" value="ECO:0007669"/>
    <property type="project" value="TreeGrafter"/>
</dbReference>
<dbReference type="GO" id="GO:0000287">
    <property type="term" value="F:magnesium ion binding"/>
    <property type="evidence" value="ECO:0007669"/>
    <property type="project" value="UniProtKB-UniRule"/>
</dbReference>
<dbReference type="GO" id="GO:0008966">
    <property type="term" value="F:phosphoglucosamine mutase activity"/>
    <property type="evidence" value="ECO:0007669"/>
    <property type="project" value="UniProtKB-UniRule"/>
</dbReference>
<dbReference type="GO" id="GO:0004615">
    <property type="term" value="F:phosphomannomutase activity"/>
    <property type="evidence" value="ECO:0007669"/>
    <property type="project" value="TreeGrafter"/>
</dbReference>
<dbReference type="GO" id="GO:0005975">
    <property type="term" value="P:carbohydrate metabolic process"/>
    <property type="evidence" value="ECO:0007669"/>
    <property type="project" value="InterPro"/>
</dbReference>
<dbReference type="GO" id="GO:0009252">
    <property type="term" value="P:peptidoglycan biosynthetic process"/>
    <property type="evidence" value="ECO:0007669"/>
    <property type="project" value="TreeGrafter"/>
</dbReference>
<dbReference type="GO" id="GO:0006048">
    <property type="term" value="P:UDP-N-acetylglucosamine biosynthetic process"/>
    <property type="evidence" value="ECO:0007669"/>
    <property type="project" value="TreeGrafter"/>
</dbReference>
<dbReference type="CDD" id="cd05802">
    <property type="entry name" value="GlmM"/>
    <property type="match status" value="1"/>
</dbReference>
<dbReference type="FunFam" id="3.30.310.50:FF:000001">
    <property type="entry name" value="Phosphoglucosamine mutase"/>
    <property type="match status" value="1"/>
</dbReference>
<dbReference type="FunFam" id="3.40.120.10:FF:000001">
    <property type="entry name" value="Phosphoglucosamine mutase"/>
    <property type="match status" value="1"/>
</dbReference>
<dbReference type="FunFam" id="3.40.120.10:FF:000002">
    <property type="entry name" value="Phosphoglucosamine mutase"/>
    <property type="match status" value="1"/>
</dbReference>
<dbReference type="Gene3D" id="3.40.120.10">
    <property type="entry name" value="Alpha-D-Glucose-1,6-Bisphosphate, subunit A, domain 3"/>
    <property type="match status" value="3"/>
</dbReference>
<dbReference type="Gene3D" id="3.30.310.50">
    <property type="entry name" value="Alpha-D-phosphohexomutase, C-terminal domain"/>
    <property type="match status" value="1"/>
</dbReference>
<dbReference type="HAMAP" id="MF_01554_B">
    <property type="entry name" value="GlmM_B"/>
    <property type="match status" value="1"/>
</dbReference>
<dbReference type="InterPro" id="IPR005844">
    <property type="entry name" value="A-D-PHexomutase_a/b/a-I"/>
</dbReference>
<dbReference type="InterPro" id="IPR016055">
    <property type="entry name" value="A-D-PHexomutase_a/b/a-I/II/III"/>
</dbReference>
<dbReference type="InterPro" id="IPR005845">
    <property type="entry name" value="A-D-PHexomutase_a/b/a-II"/>
</dbReference>
<dbReference type="InterPro" id="IPR005846">
    <property type="entry name" value="A-D-PHexomutase_a/b/a-III"/>
</dbReference>
<dbReference type="InterPro" id="IPR005843">
    <property type="entry name" value="A-D-PHexomutase_C"/>
</dbReference>
<dbReference type="InterPro" id="IPR036900">
    <property type="entry name" value="A-D-PHexomutase_C_sf"/>
</dbReference>
<dbReference type="InterPro" id="IPR016066">
    <property type="entry name" value="A-D-PHexomutase_CS"/>
</dbReference>
<dbReference type="InterPro" id="IPR005841">
    <property type="entry name" value="Alpha-D-phosphohexomutase_SF"/>
</dbReference>
<dbReference type="InterPro" id="IPR006352">
    <property type="entry name" value="GlmM_bact"/>
</dbReference>
<dbReference type="InterPro" id="IPR050060">
    <property type="entry name" value="Phosphoglucosamine_mutase"/>
</dbReference>
<dbReference type="NCBIfam" id="TIGR01455">
    <property type="entry name" value="glmM"/>
    <property type="match status" value="1"/>
</dbReference>
<dbReference type="NCBIfam" id="NF008139">
    <property type="entry name" value="PRK10887.1"/>
    <property type="match status" value="1"/>
</dbReference>
<dbReference type="PANTHER" id="PTHR42946:SF1">
    <property type="entry name" value="PHOSPHOGLUCOMUTASE (ALPHA-D-GLUCOSE-1,6-BISPHOSPHATE-DEPENDENT)"/>
    <property type="match status" value="1"/>
</dbReference>
<dbReference type="PANTHER" id="PTHR42946">
    <property type="entry name" value="PHOSPHOHEXOSE MUTASE"/>
    <property type="match status" value="1"/>
</dbReference>
<dbReference type="Pfam" id="PF02878">
    <property type="entry name" value="PGM_PMM_I"/>
    <property type="match status" value="1"/>
</dbReference>
<dbReference type="Pfam" id="PF02879">
    <property type="entry name" value="PGM_PMM_II"/>
    <property type="match status" value="1"/>
</dbReference>
<dbReference type="Pfam" id="PF02880">
    <property type="entry name" value="PGM_PMM_III"/>
    <property type="match status" value="1"/>
</dbReference>
<dbReference type="Pfam" id="PF00408">
    <property type="entry name" value="PGM_PMM_IV"/>
    <property type="match status" value="1"/>
</dbReference>
<dbReference type="PRINTS" id="PR00509">
    <property type="entry name" value="PGMPMM"/>
</dbReference>
<dbReference type="SUPFAM" id="SSF55957">
    <property type="entry name" value="Phosphoglucomutase, C-terminal domain"/>
    <property type="match status" value="1"/>
</dbReference>
<dbReference type="SUPFAM" id="SSF53738">
    <property type="entry name" value="Phosphoglucomutase, first 3 domains"/>
    <property type="match status" value="3"/>
</dbReference>
<dbReference type="PROSITE" id="PS00710">
    <property type="entry name" value="PGM_PMM"/>
    <property type="match status" value="1"/>
</dbReference>
<feature type="chain" id="PRO_0000301308" description="Phosphoglucosamine mutase">
    <location>
        <begin position="1"/>
        <end position="450"/>
    </location>
</feature>
<feature type="active site" description="Phosphoserine intermediate" evidence="1">
    <location>
        <position position="102"/>
    </location>
</feature>
<feature type="binding site" description="via phosphate group" evidence="1">
    <location>
        <position position="102"/>
    </location>
    <ligand>
        <name>Mg(2+)</name>
        <dbReference type="ChEBI" id="CHEBI:18420"/>
    </ligand>
</feature>
<feature type="binding site" evidence="1">
    <location>
        <position position="244"/>
    </location>
    <ligand>
        <name>Mg(2+)</name>
        <dbReference type="ChEBI" id="CHEBI:18420"/>
    </ligand>
</feature>
<feature type="binding site" evidence="1">
    <location>
        <position position="246"/>
    </location>
    <ligand>
        <name>Mg(2+)</name>
        <dbReference type="ChEBI" id="CHEBI:18420"/>
    </ligand>
</feature>
<feature type="binding site" evidence="1">
    <location>
        <position position="248"/>
    </location>
    <ligand>
        <name>Mg(2+)</name>
        <dbReference type="ChEBI" id="CHEBI:18420"/>
    </ligand>
</feature>
<feature type="modified residue" description="Phosphoserine" evidence="1">
    <location>
        <position position="102"/>
    </location>
</feature>
<comment type="function">
    <text evidence="1">Catalyzes the conversion of glucosamine-6-phosphate to glucosamine-1-phosphate.</text>
</comment>
<comment type="catalytic activity">
    <reaction evidence="1">
        <text>alpha-D-glucosamine 1-phosphate = D-glucosamine 6-phosphate</text>
        <dbReference type="Rhea" id="RHEA:23424"/>
        <dbReference type="ChEBI" id="CHEBI:58516"/>
        <dbReference type="ChEBI" id="CHEBI:58725"/>
        <dbReference type="EC" id="5.4.2.10"/>
    </reaction>
</comment>
<comment type="cofactor">
    <cofactor evidence="1">
        <name>Mg(2+)</name>
        <dbReference type="ChEBI" id="CHEBI:18420"/>
    </cofactor>
    <text evidence="1">Binds 1 Mg(2+) ion per subunit.</text>
</comment>
<comment type="PTM">
    <text evidence="1">Activated by phosphorylation.</text>
</comment>
<comment type="similarity">
    <text evidence="1">Belongs to the phosphohexose mutase family.</text>
</comment>
<accession>A1VED4</accession>
<protein>
    <recommendedName>
        <fullName evidence="1">Phosphoglucosamine mutase</fullName>
        <ecNumber evidence="1">5.4.2.10</ecNumber>
    </recommendedName>
</protein>
<name>GLMM_NITV4</name>
<organism>
    <name type="scientific">Nitratidesulfovibrio vulgaris (strain DP4)</name>
    <name type="common">Desulfovibrio vulgaris</name>
    <dbReference type="NCBI Taxonomy" id="391774"/>
    <lineage>
        <taxon>Bacteria</taxon>
        <taxon>Pseudomonadati</taxon>
        <taxon>Thermodesulfobacteriota</taxon>
        <taxon>Desulfovibrionia</taxon>
        <taxon>Desulfovibrionales</taxon>
        <taxon>Desulfovibrionaceae</taxon>
        <taxon>Nitratidesulfovibrio</taxon>
    </lineage>
</organism>
<proteinExistence type="inferred from homology"/>
<gene>
    <name evidence="1" type="primary">glmM</name>
    <name type="ordered locus">Dvul_1783</name>
</gene>
<keyword id="KW-0413">Isomerase</keyword>
<keyword id="KW-0460">Magnesium</keyword>
<keyword id="KW-0479">Metal-binding</keyword>
<keyword id="KW-0597">Phosphoprotein</keyword>
<reference key="1">
    <citation type="journal article" date="2009" name="Environ. Microbiol.">
        <title>Contribution of mobile genetic elements to Desulfovibrio vulgaris genome plasticity.</title>
        <authorList>
            <person name="Walker C.B."/>
            <person name="Stolyar S."/>
            <person name="Chivian D."/>
            <person name="Pinel N."/>
            <person name="Gabster J.A."/>
            <person name="Dehal P.S."/>
            <person name="He Z."/>
            <person name="Yang Z.K."/>
            <person name="Yen H.C."/>
            <person name="Zhou J."/>
            <person name="Wall J.D."/>
            <person name="Hazen T.C."/>
            <person name="Arkin A.P."/>
            <person name="Stahl D.A."/>
        </authorList>
    </citation>
    <scope>NUCLEOTIDE SEQUENCE [LARGE SCALE GENOMIC DNA]</scope>
    <source>
        <strain>DP4</strain>
    </source>
</reference>